<dbReference type="EMBL" id="AF058944">
    <property type="protein sequence ID" value="AAF25525.1"/>
    <property type="molecule type" value="Genomic_RNA"/>
</dbReference>
<dbReference type="PIR" id="JQ1173">
    <property type="entry name" value="JQ1173"/>
</dbReference>
<dbReference type="SMR" id="P26020"/>
<dbReference type="GO" id="GO:0044172">
    <property type="term" value="C:host cell endoplasmic reticulum-Golgi intermediate compartment"/>
    <property type="evidence" value="ECO:0007669"/>
    <property type="project" value="UniProtKB-SubCell"/>
</dbReference>
<dbReference type="GO" id="GO:0044177">
    <property type="term" value="C:host cell Golgi apparatus"/>
    <property type="evidence" value="ECO:0007669"/>
    <property type="project" value="UniProtKB-SubCell"/>
</dbReference>
<dbReference type="GO" id="GO:1990904">
    <property type="term" value="C:ribonucleoprotein complex"/>
    <property type="evidence" value="ECO:0007669"/>
    <property type="project" value="UniProtKB-KW"/>
</dbReference>
<dbReference type="GO" id="GO:0019013">
    <property type="term" value="C:viral nucleocapsid"/>
    <property type="evidence" value="ECO:0007669"/>
    <property type="project" value="UniProtKB-UniRule"/>
</dbReference>
<dbReference type="GO" id="GO:0003723">
    <property type="term" value="F:RNA binding"/>
    <property type="evidence" value="ECO:0007669"/>
    <property type="project" value="UniProtKB-UniRule"/>
</dbReference>
<dbReference type="CDD" id="cd21595">
    <property type="entry name" value="CoV_N-CTD"/>
    <property type="match status" value="1"/>
</dbReference>
<dbReference type="CDD" id="cd21554">
    <property type="entry name" value="CoV_N-NTD"/>
    <property type="match status" value="1"/>
</dbReference>
<dbReference type="HAMAP" id="MF_04096">
    <property type="entry name" value="BETA_CORONA_NCAP"/>
    <property type="match status" value="1"/>
</dbReference>
<dbReference type="InterPro" id="IPR044344">
    <property type="entry name" value="N_prot_C_CoV"/>
</dbReference>
<dbReference type="InterPro" id="IPR044345">
    <property type="entry name" value="N_prot_N_CoV"/>
</dbReference>
<dbReference type="InterPro" id="IPR043505">
    <property type="entry name" value="NCAP_bCoV"/>
</dbReference>
<dbReference type="InterPro" id="IPR001218">
    <property type="entry name" value="Nucleocap_CoV"/>
</dbReference>
<dbReference type="InterPro" id="IPR037179">
    <property type="entry name" value="Nucleocapsid_C"/>
</dbReference>
<dbReference type="InterPro" id="IPR037195">
    <property type="entry name" value="Nucleocapsid_N"/>
</dbReference>
<dbReference type="Pfam" id="PF00937">
    <property type="entry name" value="CoV_nucleocap"/>
    <property type="match status" value="1"/>
</dbReference>
<dbReference type="PIRSF" id="PIRSF003888">
    <property type="entry name" value="Corona_nucleocap"/>
    <property type="match status" value="1"/>
</dbReference>
<dbReference type="SUPFAM" id="SSF110304">
    <property type="entry name" value="Coronavirus RNA-binding domain"/>
    <property type="match status" value="1"/>
</dbReference>
<dbReference type="SUPFAM" id="SSF103068">
    <property type="entry name" value="Nucleocapsid protein dimerization domain"/>
    <property type="match status" value="1"/>
</dbReference>
<dbReference type="PROSITE" id="PS51929">
    <property type="entry name" value="COV_N_CTD"/>
    <property type="match status" value="1"/>
</dbReference>
<dbReference type="PROSITE" id="PS51928">
    <property type="entry name" value="COV_N_NTD"/>
    <property type="match status" value="1"/>
</dbReference>
<sequence length="448" mass="49329">MSFTPGKQSSSRASSGNRSGNGILKWADQSDQSRNVQTRGRRAQPKQTATSQQPSGGNVVPYYSWFSGITQFQKGKEFEFAEGQGVPIAPGVPATEAKGYWYRHNRRSFKTADGNQRQLLPRWYFYYLGTGPHAKDQYGTDIDGVFWVASNQADVNTPADILDRDPSSDEAIPTRFPPGTVLPQGYYIEGSGRSAPNSRSTSRASSRASSAGSRSRANSGNRTPTSGVTPDMADQIASLVLAKLGKDATKPQQVTKQTAKEIRQKILNKPRQKRSPNKQCTVQQCFGKRGPNQNFGGGEMLKLGTSDPQFPILAELAPTAGAFFFGSRLELAKVQNLSGNLDEPQKDVYELRYNGAIRFDSTLSGFETIMKVLNENLNAYQQQDGMMNMSPKPQRQRGQKNGQGENDNISVAAPKSRVQQNKSRELTAEDISLLKKMDEPYTEDTSEI</sequence>
<keyword id="KW-0013">ADP-ribosylation</keyword>
<keyword id="KW-1040">Host Golgi apparatus</keyword>
<keyword id="KW-0597">Phosphoprotein</keyword>
<keyword id="KW-0687">Ribonucleoprotein</keyword>
<keyword id="KW-0694">RNA-binding</keyword>
<keyword id="KW-0804">Transcription</keyword>
<keyword id="KW-0805">Transcription regulation</keyword>
<keyword id="KW-0543">Viral nucleoprotein</keyword>
<keyword id="KW-0946">Virion</keyword>
<gene>
    <name evidence="2" type="primary">N</name>
    <name type="ORF">7a</name>
</gene>
<accession>P26020</accession>
<feature type="chain" id="PRO_0000105995" description="Nucleoprotein">
    <location>
        <begin position="1"/>
        <end position="448"/>
    </location>
</feature>
<feature type="domain" description="CoV N NTD" evidence="3">
    <location>
        <begin position="61"/>
        <end position="190"/>
    </location>
</feature>
<feature type="domain" description="CoV N CTD" evidence="4">
    <location>
        <begin position="259"/>
        <end position="384"/>
    </location>
</feature>
<feature type="region of interest" description="Disordered" evidence="5">
    <location>
        <begin position="1"/>
        <end position="55"/>
    </location>
</feature>
<feature type="region of interest" description="RNA-binding" evidence="2">
    <location>
        <begin position="52"/>
        <end position="194"/>
    </location>
</feature>
<feature type="region of interest" description="Disordered" evidence="5">
    <location>
        <begin position="157"/>
        <end position="231"/>
    </location>
</feature>
<feature type="region of interest" description="Dimerization" evidence="2">
    <location>
        <begin position="266"/>
        <end position="384"/>
    </location>
</feature>
<feature type="region of interest" description="Disordered" evidence="5">
    <location>
        <begin position="266"/>
        <end position="297"/>
    </location>
</feature>
<feature type="region of interest" description="Disordered" evidence="5">
    <location>
        <begin position="385"/>
        <end position="448"/>
    </location>
</feature>
<feature type="compositionally biased region" description="Low complexity" evidence="5">
    <location>
        <begin position="9"/>
        <end position="22"/>
    </location>
</feature>
<feature type="compositionally biased region" description="Polar residues" evidence="5">
    <location>
        <begin position="29"/>
        <end position="38"/>
    </location>
</feature>
<feature type="compositionally biased region" description="Polar residues" evidence="5">
    <location>
        <begin position="45"/>
        <end position="55"/>
    </location>
</feature>
<feature type="compositionally biased region" description="Low complexity" evidence="5">
    <location>
        <begin position="193"/>
        <end position="223"/>
    </location>
</feature>
<feature type="compositionally biased region" description="Basic residues" evidence="5">
    <location>
        <begin position="266"/>
        <end position="276"/>
    </location>
</feature>
<feature type="compositionally biased region" description="Polar residues" evidence="5">
    <location>
        <begin position="399"/>
        <end position="409"/>
    </location>
</feature>
<feature type="compositionally biased region" description="Basic and acidic residues" evidence="5">
    <location>
        <begin position="422"/>
        <end position="439"/>
    </location>
</feature>
<feature type="binding site" evidence="1">
    <location>
        <position position="106"/>
    </location>
    <ligand>
        <name>RNA</name>
        <dbReference type="ChEBI" id="CHEBI:33697"/>
    </ligand>
</feature>
<feature type="binding site" evidence="1">
    <location>
        <position position="122"/>
    </location>
    <ligand>
        <name>RNA</name>
        <dbReference type="ChEBI" id="CHEBI:33697"/>
    </ligand>
</feature>
<feature type="binding site" evidence="1">
    <location>
        <position position="164"/>
    </location>
    <ligand>
        <name>RNA</name>
        <dbReference type="ChEBI" id="CHEBI:33697"/>
    </ligand>
</feature>
<feature type="modified residue" description="Phosphoserine; by host" evidence="2">
    <location>
        <position position="167"/>
    </location>
</feature>
<feature type="modified residue" description="Phosphothreonine; by host" evidence="2">
    <location>
        <position position="174"/>
    </location>
</feature>
<feature type="modified residue" description="Phosphoserine; by host" evidence="2">
    <location>
        <position position="191"/>
    </location>
</feature>
<feature type="modified residue" description="Phosphoserine; by host" evidence="2">
    <location>
        <position position="390"/>
    </location>
</feature>
<feature type="modified residue" description="Phosphoserine; by host" evidence="2">
    <location>
        <position position="423"/>
    </location>
</feature>
<feature type="modified residue" description="Phosphothreonine; by host" evidence="2">
    <location>
        <position position="427"/>
    </location>
</feature>
<organism>
    <name type="scientific">Bovine coronavirus (strain OK-0514)</name>
    <name type="common">BCoV</name>
    <name type="synonym">BCV</name>
    <dbReference type="NCBI Taxonomy" id="231432"/>
    <lineage>
        <taxon>Viruses</taxon>
        <taxon>Riboviria</taxon>
        <taxon>Orthornavirae</taxon>
        <taxon>Pisuviricota</taxon>
        <taxon>Pisoniviricetes</taxon>
        <taxon>Nidovirales</taxon>
        <taxon>Cornidovirineae</taxon>
        <taxon>Coronaviridae</taxon>
        <taxon>Orthocoronavirinae</taxon>
        <taxon>Betacoronavirus</taxon>
        <taxon>Embecovirus</taxon>
        <taxon>Betacoronavirus 1</taxon>
    </lineage>
</organism>
<name>NCAP_CVBOK</name>
<organismHost>
    <name type="scientific">Bos taurus</name>
    <name type="common">Bovine</name>
    <dbReference type="NCBI Taxonomy" id="9913"/>
</organismHost>
<proteinExistence type="inferred from homology"/>
<comment type="function">
    <text evidence="2">Packages the positive strand viral genome RNA into a helical ribonucleocapsid (RNP) and plays a fundamental role during virion assembly through its interactions with the viral genome and membrane protein M. Plays an important role in enhancing the efficiency of subgenomic viral RNA transcription as well as viral replication.</text>
</comment>
<comment type="subunit">
    <text evidence="2">Homooligomer. Both monomeric and oligomeric forms interact with RNA. Interacts with protein M. Interacts with NSP3; this interaction serves to tether the genome to the newly translated replicase-transcriptase complex at a very early stage of infection.</text>
</comment>
<comment type="subcellular location">
    <subcellularLocation>
        <location evidence="2">Virion</location>
    </subcellularLocation>
    <subcellularLocation>
        <location evidence="2">Host endoplasmic reticulum-Golgi intermediate compartment</location>
    </subcellularLocation>
    <subcellularLocation>
        <location evidence="2">Host Golgi apparatus</location>
    </subcellularLocation>
    <text evidence="2">Located inside the virion, complexed with the viral RNA. Probably associates with ER-derived membranes where it participates in viral RNA synthesis and virus budding.</text>
</comment>
<comment type="PTM">
    <text evidence="2">ADP-ribosylated. The ADP-ribosylation is retained in the virion during infection.</text>
</comment>
<comment type="PTM">
    <text evidence="2">Phosphorylated on serine and threonine residues.</text>
</comment>
<comment type="similarity">
    <text evidence="2">Belongs to the betacoronavirus nucleocapsid protein family.</text>
</comment>
<comment type="caution">
    <text evidence="6">Was originally thought to originate from Turkey coronavirus.</text>
</comment>
<protein>
    <recommendedName>
        <fullName evidence="2">Nucleoprotein</fullName>
    </recommendedName>
    <alternativeName>
        <fullName evidence="2">Nucleocapsid protein</fullName>
        <shortName evidence="2">NC</shortName>
        <shortName evidence="2">Protein N</shortName>
    </alternativeName>
</protein>
<reference key="1">
    <citation type="journal article" date="1991" name="J. Gen. Virol.">
        <title>Sequence analysis of the turkey enteric coronavirus nucleocapsid and membrane protein genes: a close genomic relationship with bovine coronavirus.</title>
        <authorList>
            <person name="Verbeek A."/>
            <person name="Tijssen P."/>
        </authorList>
    </citation>
    <scope>NUCLEOTIDE SEQUENCE [GENOMIC RNA]</scope>
</reference>
<reference key="2">
    <citation type="journal article" date="1998" name="Virus Genes">
        <title>Nucleotide and predicted amino acid sequences of all genes encoded by the 3' genomic portion (9.5 kb) of respiratory bovine coronaviruses and comparisons among respiratory and enteric coronaviruses.</title>
        <authorList>
            <person name="Chouljenko V.N."/>
            <person name="Kousoulas K.G."/>
            <person name="Lin X.Q."/>
            <person name="Storz J."/>
        </authorList>
    </citation>
    <scope>NUCLEOTIDE SEQUENCE [GENOMIC RNA]</scope>
    <source>
        <strain>Isolate OK-0514-3</strain>
    </source>
</reference>
<evidence type="ECO:0000250" key="1">
    <source>
        <dbReference type="UniProtKB" id="P0DTC9"/>
    </source>
</evidence>
<evidence type="ECO:0000255" key="2">
    <source>
        <dbReference type="HAMAP-Rule" id="MF_04096"/>
    </source>
</evidence>
<evidence type="ECO:0000255" key="3">
    <source>
        <dbReference type="PROSITE-ProRule" id="PRU01276"/>
    </source>
</evidence>
<evidence type="ECO:0000255" key="4">
    <source>
        <dbReference type="PROSITE-ProRule" id="PRU01277"/>
    </source>
</evidence>
<evidence type="ECO:0000256" key="5">
    <source>
        <dbReference type="SAM" id="MobiDB-lite"/>
    </source>
</evidence>
<evidence type="ECO:0000305" key="6">
    <source>
    </source>
</evidence>